<keyword id="KW-0687">Ribonucleoprotein</keyword>
<keyword id="KW-0689">Ribosomal protein</keyword>
<feature type="chain" id="PRO_1000015026" description="Small ribosomal subunit protein uS10">
    <location>
        <begin position="1"/>
        <end position="105"/>
    </location>
</feature>
<comment type="function">
    <text evidence="1">Involved in the binding of tRNA to the ribosomes.</text>
</comment>
<comment type="subunit">
    <text evidence="1">Part of the 30S ribosomal subunit.</text>
</comment>
<comment type="similarity">
    <text evidence="1">Belongs to the universal ribosomal protein uS10 family.</text>
</comment>
<name>RS10_FRATW</name>
<reference key="1">
    <citation type="journal article" date="2007" name="PLoS ONE">
        <title>Complete genomic characterization of a pathogenic A.II strain of Francisella tularensis subspecies tularensis.</title>
        <authorList>
            <person name="Beckstrom-Sternberg S.M."/>
            <person name="Auerbach R.K."/>
            <person name="Godbole S."/>
            <person name="Pearson J.V."/>
            <person name="Beckstrom-Sternberg J.S."/>
            <person name="Deng Z."/>
            <person name="Munk C."/>
            <person name="Kubota K."/>
            <person name="Zhou Y."/>
            <person name="Bruce D."/>
            <person name="Noronha J."/>
            <person name="Scheuermann R.H."/>
            <person name="Wang A."/>
            <person name="Wei X."/>
            <person name="Wang J."/>
            <person name="Hao J."/>
            <person name="Wagner D.M."/>
            <person name="Brettin T.S."/>
            <person name="Brown N."/>
            <person name="Gilna P."/>
            <person name="Keim P.S."/>
        </authorList>
    </citation>
    <scope>NUCLEOTIDE SEQUENCE [LARGE SCALE GENOMIC DNA]</scope>
    <source>
        <strain>WY96-3418</strain>
    </source>
</reference>
<protein>
    <recommendedName>
        <fullName evidence="1">Small ribosomal subunit protein uS10</fullName>
    </recommendedName>
    <alternativeName>
        <fullName evidence="2">30S ribosomal protein S10</fullName>
    </alternativeName>
</protein>
<dbReference type="EMBL" id="CP000608">
    <property type="protein sequence ID" value="ABO47434.1"/>
    <property type="molecule type" value="Genomic_DNA"/>
</dbReference>
<dbReference type="SMR" id="A4IZT5"/>
<dbReference type="KEGG" id="ftw:FTW_1758"/>
<dbReference type="HOGENOM" id="CLU_122625_1_3_6"/>
<dbReference type="GO" id="GO:1990904">
    <property type="term" value="C:ribonucleoprotein complex"/>
    <property type="evidence" value="ECO:0007669"/>
    <property type="project" value="UniProtKB-KW"/>
</dbReference>
<dbReference type="GO" id="GO:0005840">
    <property type="term" value="C:ribosome"/>
    <property type="evidence" value="ECO:0007669"/>
    <property type="project" value="UniProtKB-KW"/>
</dbReference>
<dbReference type="GO" id="GO:0003735">
    <property type="term" value="F:structural constituent of ribosome"/>
    <property type="evidence" value="ECO:0007669"/>
    <property type="project" value="InterPro"/>
</dbReference>
<dbReference type="GO" id="GO:0000049">
    <property type="term" value="F:tRNA binding"/>
    <property type="evidence" value="ECO:0007669"/>
    <property type="project" value="UniProtKB-UniRule"/>
</dbReference>
<dbReference type="GO" id="GO:0006412">
    <property type="term" value="P:translation"/>
    <property type="evidence" value="ECO:0007669"/>
    <property type="project" value="UniProtKB-UniRule"/>
</dbReference>
<dbReference type="FunFam" id="3.30.70.600:FF:000001">
    <property type="entry name" value="30S ribosomal protein S10"/>
    <property type="match status" value="1"/>
</dbReference>
<dbReference type="Gene3D" id="3.30.70.600">
    <property type="entry name" value="Ribosomal protein S10 domain"/>
    <property type="match status" value="1"/>
</dbReference>
<dbReference type="HAMAP" id="MF_00508">
    <property type="entry name" value="Ribosomal_uS10"/>
    <property type="match status" value="1"/>
</dbReference>
<dbReference type="InterPro" id="IPR001848">
    <property type="entry name" value="Ribosomal_uS10"/>
</dbReference>
<dbReference type="InterPro" id="IPR027486">
    <property type="entry name" value="Ribosomal_uS10_dom"/>
</dbReference>
<dbReference type="InterPro" id="IPR036838">
    <property type="entry name" value="Ribosomal_uS10_dom_sf"/>
</dbReference>
<dbReference type="NCBIfam" id="NF001861">
    <property type="entry name" value="PRK00596.1"/>
    <property type="match status" value="1"/>
</dbReference>
<dbReference type="NCBIfam" id="TIGR01049">
    <property type="entry name" value="rpsJ_bact"/>
    <property type="match status" value="1"/>
</dbReference>
<dbReference type="PANTHER" id="PTHR11700">
    <property type="entry name" value="30S RIBOSOMAL PROTEIN S10 FAMILY MEMBER"/>
    <property type="match status" value="1"/>
</dbReference>
<dbReference type="Pfam" id="PF00338">
    <property type="entry name" value="Ribosomal_S10"/>
    <property type="match status" value="1"/>
</dbReference>
<dbReference type="PRINTS" id="PR00971">
    <property type="entry name" value="RIBOSOMALS10"/>
</dbReference>
<dbReference type="SMART" id="SM01403">
    <property type="entry name" value="Ribosomal_S10"/>
    <property type="match status" value="1"/>
</dbReference>
<dbReference type="SUPFAM" id="SSF54999">
    <property type="entry name" value="Ribosomal protein S10"/>
    <property type="match status" value="1"/>
</dbReference>
<gene>
    <name evidence="1" type="primary">rpsJ</name>
    <name type="ordered locus">FTW_1758</name>
</gene>
<organism>
    <name type="scientific">Francisella tularensis subsp. tularensis (strain WY96-3418)</name>
    <dbReference type="NCBI Taxonomy" id="418136"/>
    <lineage>
        <taxon>Bacteria</taxon>
        <taxon>Pseudomonadati</taxon>
        <taxon>Pseudomonadota</taxon>
        <taxon>Gammaproteobacteria</taxon>
        <taxon>Thiotrichales</taxon>
        <taxon>Francisellaceae</taxon>
        <taxon>Francisella</taxon>
    </lineage>
</organism>
<sequence>MAINNQRIRIRLKAFDHKLIDISTQEIVDTAKKTGAQVKGPIPLPVRKERFTILISPHVNKKARDQYEIRTHKRLIDIVEPTDKTVDALMKLDLASGVDVQISLS</sequence>
<evidence type="ECO:0000255" key="1">
    <source>
        <dbReference type="HAMAP-Rule" id="MF_00508"/>
    </source>
</evidence>
<evidence type="ECO:0000305" key="2"/>
<accession>A4IZT5</accession>
<proteinExistence type="inferred from homology"/>